<feature type="chain" id="PRO_0000335045" description="Glutamyl-tRNA reductase">
    <location>
        <begin position="1"/>
        <end position="447"/>
    </location>
</feature>
<feature type="active site" description="Nucleophile" evidence="1">
    <location>
        <position position="57"/>
    </location>
</feature>
<feature type="binding site" evidence="1">
    <location>
        <begin position="56"/>
        <end position="59"/>
    </location>
    <ligand>
        <name>substrate</name>
    </ligand>
</feature>
<feature type="binding site" evidence="1">
    <location>
        <position position="119"/>
    </location>
    <ligand>
        <name>substrate</name>
    </ligand>
</feature>
<feature type="binding site" evidence="1">
    <location>
        <begin position="124"/>
        <end position="126"/>
    </location>
    <ligand>
        <name>substrate</name>
    </ligand>
</feature>
<feature type="binding site" evidence="1">
    <location>
        <position position="130"/>
    </location>
    <ligand>
        <name>substrate</name>
    </ligand>
</feature>
<feature type="binding site" evidence="1">
    <location>
        <begin position="201"/>
        <end position="206"/>
    </location>
    <ligand>
        <name>NADP(+)</name>
        <dbReference type="ChEBI" id="CHEBI:58349"/>
    </ligand>
</feature>
<feature type="site" description="Important for activity" evidence="1">
    <location>
        <position position="109"/>
    </location>
</feature>
<proteinExistence type="inferred from homology"/>
<evidence type="ECO:0000255" key="1">
    <source>
        <dbReference type="HAMAP-Rule" id="MF_00087"/>
    </source>
</evidence>
<keyword id="KW-0521">NADP</keyword>
<keyword id="KW-0560">Oxidoreductase</keyword>
<keyword id="KW-0627">Porphyrin biosynthesis</keyword>
<reference key="1">
    <citation type="journal article" date="2006" name="PLoS Genet.">
        <title>Who ate whom? Adaptive Helicobacter genomic changes that accompanied a host jump from early humans to large felines.</title>
        <authorList>
            <person name="Eppinger M."/>
            <person name="Baar C."/>
            <person name="Linz B."/>
            <person name="Raddatz G."/>
            <person name="Lanz C."/>
            <person name="Keller H."/>
            <person name="Morelli G."/>
            <person name="Gressmann H."/>
            <person name="Achtman M."/>
            <person name="Schuster S.C."/>
        </authorList>
    </citation>
    <scope>NUCLEOTIDE SEQUENCE [LARGE SCALE GENOMIC DNA]</scope>
    <source>
        <strain>Sheeba</strain>
    </source>
</reference>
<protein>
    <recommendedName>
        <fullName evidence="1">Glutamyl-tRNA reductase</fullName>
        <shortName evidence="1">GluTR</shortName>
        <ecNumber evidence="1">1.2.1.70</ecNumber>
    </recommendedName>
</protein>
<name>HEM1_HELAH</name>
<sequence length="447" mass="51599">MELETTKYFILAFTHKSMSLEMREKLAINSPAILKEFLQTIKNYCPNIKECMVLSTCNRFEIYASLKHNTHADEQKNALLKILAQNKKMSVSDLEKCVLMSTDESAVHHVFSVCSSLDSLVVGETQITGQMKNAYKFAFEEKFCSKDLTRLLHFAFKCAAKVRNLTGISKQGVSISSVAVKEALSIFEKEKIEDKKALVIGLGEMSQLVIKHLLNKQFEVLVLGRNAAKFEDFLKELEEPKKVSFQNIENLNAYINAYELLFCATSSPNFIVQNCMVKETIFRRFWFDLAVPRNIEKPIFNNIFLYSVDDLEPMVRENVENRQESRMKAYEIVGLATMEFYQWIQSLEVEPLIKDLRELARISAQKELQKAVKKRYVPKEYESNIEKILHNAFNAFLHHPTIALKKNAQKEESDVLVGTIKNLFNLDKSSTNHAQNLNLYKCEYYEE</sequence>
<organism>
    <name type="scientific">Helicobacter acinonychis (strain Sheeba)</name>
    <dbReference type="NCBI Taxonomy" id="382638"/>
    <lineage>
        <taxon>Bacteria</taxon>
        <taxon>Pseudomonadati</taxon>
        <taxon>Campylobacterota</taxon>
        <taxon>Epsilonproteobacteria</taxon>
        <taxon>Campylobacterales</taxon>
        <taxon>Helicobacteraceae</taxon>
        <taxon>Helicobacter</taxon>
    </lineage>
</organism>
<accession>Q17W63</accession>
<gene>
    <name evidence="1" type="primary">hemA</name>
    <name type="ordered locus">Hac_1379</name>
</gene>
<comment type="function">
    <text evidence="1">Catalyzes the NADPH-dependent reduction of glutamyl-tRNA(Glu) to glutamate 1-semialdehyde (GSA).</text>
</comment>
<comment type="catalytic activity">
    <reaction evidence="1">
        <text>(S)-4-amino-5-oxopentanoate + tRNA(Glu) + NADP(+) = L-glutamyl-tRNA(Glu) + NADPH + H(+)</text>
        <dbReference type="Rhea" id="RHEA:12344"/>
        <dbReference type="Rhea" id="RHEA-COMP:9663"/>
        <dbReference type="Rhea" id="RHEA-COMP:9680"/>
        <dbReference type="ChEBI" id="CHEBI:15378"/>
        <dbReference type="ChEBI" id="CHEBI:57501"/>
        <dbReference type="ChEBI" id="CHEBI:57783"/>
        <dbReference type="ChEBI" id="CHEBI:58349"/>
        <dbReference type="ChEBI" id="CHEBI:78442"/>
        <dbReference type="ChEBI" id="CHEBI:78520"/>
        <dbReference type="EC" id="1.2.1.70"/>
    </reaction>
</comment>
<comment type="pathway">
    <text evidence="1">Porphyrin-containing compound metabolism; protoporphyrin-IX biosynthesis; 5-aminolevulinate from L-glutamyl-tRNA(Glu): step 1/2.</text>
</comment>
<comment type="subunit">
    <text evidence="1">Homodimer.</text>
</comment>
<comment type="domain">
    <text evidence="1">Possesses an unusual extended V-shaped dimeric structure with each monomer consisting of three distinct domains arranged along a curved 'spinal' alpha-helix. The N-terminal catalytic domain specifically recognizes the glutamate moiety of the substrate. The second domain is the NADPH-binding domain, and the third C-terminal domain is responsible for dimerization.</text>
</comment>
<comment type="miscellaneous">
    <text evidence="1">During catalysis, the active site Cys acts as a nucleophile attacking the alpha-carbonyl group of tRNA-bound glutamate with the formation of a thioester intermediate between enzyme and glutamate, and the concomitant release of tRNA(Glu). The thioester intermediate is finally reduced by direct hydride transfer from NADPH, to form the product GSA.</text>
</comment>
<comment type="similarity">
    <text evidence="1">Belongs to the glutamyl-tRNA reductase family.</text>
</comment>
<dbReference type="EC" id="1.2.1.70" evidence="1"/>
<dbReference type="EMBL" id="AM260522">
    <property type="protein sequence ID" value="CAK00113.1"/>
    <property type="molecule type" value="Genomic_DNA"/>
</dbReference>
<dbReference type="RefSeq" id="WP_011578203.1">
    <property type="nucleotide sequence ID" value="NC_008229.1"/>
</dbReference>
<dbReference type="SMR" id="Q17W63"/>
<dbReference type="STRING" id="382638.Hac_1379"/>
<dbReference type="GeneID" id="31758684"/>
<dbReference type="KEGG" id="hac:Hac_1379"/>
<dbReference type="eggNOG" id="COG0373">
    <property type="taxonomic scope" value="Bacteria"/>
</dbReference>
<dbReference type="HOGENOM" id="CLU_035113_2_2_7"/>
<dbReference type="OrthoDB" id="110209at2"/>
<dbReference type="BioCyc" id="HACI382638:HAC_RS05895-MONOMER"/>
<dbReference type="UniPathway" id="UPA00251">
    <property type="reaction ID" value="UER00316"/>
</dbReference>
<dbReference type="Proteomes" id="UP000000775">
    <property type="component" value="Chromosome"/>
</dbReference>
<dbReference type="GO" id="GO:0008883">
    <property type="term" value="F:glutamyl-tRNA reductase activity"/>
    <property type="evidence" value="ECO:0007669"/>
    <property type="project" value="UniProtKB-UniRule"/>
</dbReference>
<dbReference type="GO" id="GO:0050661">
    <property type="term" value="F:NADP binding"/>
    <property type="evidence" value="ECO:0007669"/>
    <property type="project" value="InterPro"/>
</dbReference>
<dbReference type="GO" id="GO:0006782">
    <property type="term" value="P:protoporphyrinogen IX biosynthetic process"/>
    <property type="evidence" value="ECO:0007669"/>
    <property type="project" value="UniProtKB-UniRule"/>
</dbReference>
<dbReference type="CDD" id="cd05213">
    <property type="entry name" value="NAD_bind_Glutamyl_tRNA_reduct"/>
    <property type="match status" value="1"/>
</dbReference>
<dbReference type="FunFam" id="3.30.460.30:FF:000001">
    <property type="entry name" value="Glutamyl-tRNA reductase"/>
    <property type="match status" value="1"/>
</dbReference>
<dbReference type="Gene3D" id="3.30.460.30">
    <property type="entry name" value="Glutamyl-tRNA reductase, N-terminal domain"/>
    <property type="match status" value="1"/>
</dbReference>
<dbReference type="Gene3D" id="3.40.50.720">
    <property type="entry name" value="NAD(P)-binding Rossmann-like Domain"/>
    <property type="match status" value="1"/>
</dbReference>
<dbReference type="HAMAP" id="MF_00087">
    <property type="entry name" value="Glu_tRNA_reductase"/>
    <property type="match status" value="1"/>
</dbReference>
<dbReference type="InterPro" id="IPR000343">
    <property type="entry name" value="4pyrrol_synth_GluRdtase"/>
</dbReference>
<dbReference type="InterPro" id="IPR015896">
    <property type="entry name" value="4pyrrol_synth_GluRdtase_dimer"/>
</dbReference>
<dbReference type="InterPro" id="IPR015895">
    <property type="entry name" value="4pyrrol_synth_GluRdtase_N"/>
</dbReference>
<dbReference type="InterPro" id="IPR018214">
    <property type="entry name" value="GluRdtase_CS"/>
</dbReference>
<dbReference type="InterPro" id="IPR036453">
    <property type="entry name" value="GluRdtase_dimer_dom_sf"/>
</dbReference>
<dbReference type="InterPro" id="IPR036343">
    <property type="entry name" value="GluRdtase_N_sf"/>
</dbReference>
<dbReference type="InterPro" id="IPR036291">
    <property type="entry name" value="NAD(P)-bd_dom_sf"/>
</dbReference>
<dbReference type="InterPro" id="IPR006151">
    <property type="entry name" value="Shikm_DH/Glu-tRNA_Rdtase"/>
</dbReference>
<dbReference type="NCBIfam" id="TIGR01035">
    <property type="entry name" value="hemA"/>
    <property type="match status" value="1"/>
</dbReference>
<dbReference type="PANTHER" id="PTHR43120">
    <property type="entry name" value="GLUTAMYL-TRNA REDUCTASE 1, CHLOROPLASTIC"/>
    <property type="match status" value="1"/>
</dbReference>
<dbReference type="PANTHER" id="PTHR43120:SF1">
    <property type="entry name" value="GLUTAMYL-TRNA REDUCTASE 1, CHLOROPLASTIC"/>
    <property type="match status" value="1"/>
</dbReference>
<dbReference type="Pfam" id="PF00745">
    <property type="entry name" value="GlutR_dimer"/>
    <property type="match status" value="1"/>
</dbReference>
<dbReference type="Pfam" id="PF05201">
    <property type="entry name" value="GlutR_N"/>
    <property type="match status" value="1"/>
</dbReference>
<dbReference type="Pfam" id="PF01488">
    <property type="entry name" value="Shikimate_DH"/>
    <property type="match status" value="1"/>
</dbReference>
<dbReference type="PIRSF" id="PIRSF000445">
    <property type="entry name" value="4pyrrol_synth_GluRdtase"/>
    <property type="match status" value="1"/>
</dbReference>
<dbReference type="SUPFAM" id="SSF69742">
    <property type="entry name" value="Glutamyl tRNA-reductase catalytic, N-terminal domain"/>
    <property type="match status" value="1"/>
</dbReference>
<dbReference type="SUPFAM" id="SSF69075">
    <property type="entry name" value="Glutamyl tRNA-reductase dimerization domain"/>
    <property type="match status" value="1"/>
</dbReference>
<dbReference type="SUPFAM" id="SSF51735">
    <property type="entry name" value="NAD(P)-binding Rossmann-fold domains"/>
    <property type="match status" value="1"/>
</dbReference>
<dbReference type="PROSITE" id="PS00747">
    <property type="entry name" value="GLUTR"/>
    <property type="match status" value="1"/>
</dbReference>